<proteinExistence type="inferred from homology"/>
<feature type="chain" id="PRO_0000382250" description="Glutamate-1-semialdehyde 2,1-aminomutase 1">
    <location>
        <begin position="1"/>
        <end position="431"/>
    </location>
</feature>
<feature type="modified residue" description="N6-(pyridoxal phosphate)lysine" evidence="1">
    <location>
        <position position="268"/>
    </location>
</feature>
<keyword id="KW-0963">Cytoplasm</keyword>
<keyword id="KW-0413">Isomerase</keyword>
<keyword id="KW-0627">Porphyrin biosynthesis</keyword>
<keyword id="KW-0663">Pyridoxal phosphate</keyword>
<protein>
    <recommendedName>
        <fullName evidence="1">Glutamate-1-semialdehyde 2,1-aminomutase 1</fullName>
        <shortName evidence="1">GSA 1</shortName>
        <ecNumber evidence="1">5.4.3.8</ecNumber>
    </recommendedName>
    <alternativeName>
        <fullName evidence="1">Glutamate-1-semialdehyde aminotransferase 1</fullName>
        <shortName evidence="1">GSA-AT 1</shortName>
    </alternativeName>
</protein>
<sequence length="431" mass="46612">MNFTKSEQLYQEALEHIVGGVNSPSRSYKAVGGGAPVVMERAQGAYFWDVDGNKYIDYLAAYGPIITGHAHPHITKAIQHAAENGVLYGTPTPYEITFAKMLKEAIPSLEKVRFVNSGTEAVMTTIRVARAYTGRDKIVKFAGCYHGHSDLVLVAAGSGPSTLGTPDSAGVPKSIAQEVITVPFNDVDAFKQAMDRWGNEVAAVLVEPIVGNFGIVEPKPGFLQAINDIAHAVGALVIYDEVITAFRFMYGGAQNLLGIEPDLTALGKIIGGGLPIGAYGGRKDIMEQVAPLGPAYQAGTMAGNPASILAGIACLEVLQQEGVYEHLDHLGAMLEAGILTHAKTYDIPITINRLKGALTVYFTTEKVENYEQAERTDGEMFAKFFKLMLHQGINLAPSKYEAWFITLAHTEEDIEYTIEAVERAFKSLKNE</sequence>
<reference key="1">
    <citation type="journal article" date="2008" name="Genome Biol.">
        <title>Encapsulated in silica: genome, proteome and physiology of the thermophilic bacterium Anoxybacillus flavithermus WK1.</title>
        <authorList>
            <person name="Saw J.H."/>
            <person name="Mountain B.W."/>
            <person name="Feng L."/>
            <person name="Omelchenko M.V."/>
            <person name="Hou S."/>
            <person name="Saito J.A."/>
            <person name="Stott M.B."/>
            <person name="Li D."/>
            <person name="Zhao G."/>
            <person name="Wu J."/>
            <person name="Galperin M.Y."/>
            <person name="Koonin E.V."/>
            <person name="Makarova K.S."/>
            <person name="Wolf Y.I."/>
            <person name="Rigden D.J."/>
            <person name="Dunfield P.F."/>
            <person name="Wang L."/>
            <person name="Alam M."/>
        </authorList>
    </citation>
    <scope>NUCLEOTIDE SEQUENCE [LARGE SCALE GENOMIC DNA]</scope>
    <source>
        <strain>DSM 21510 / WK1</strain>
    </source>
</reference>
<comment type="catalytic activity">
    <reaction evidence="1">
        <text>(S)-4-amino-5-oxopentanoate = 5-aminolevulinate</text>
        <dbReference type="Rhea" id="RHEA:14265"/>
        <dbReference type="ChEBI" id="CHEBI:57501"/>
        <dbReference type="ChEBI" id="CHEBI:356416"/>
        <dbReference type="EC" id="5.4.3.8"/>
    </reaction>
</comment>
<comment type="cofactor">
    <cofactor evidence="1">
        <name>pyridoxal 5'-phosphate</name>
        <dbReference type="ChEBI" id="CHEBI:597326"/>
    </cofactor>
</comment>
<comment type="pathway">
    <text evidence="1">Porphyrin-containing compound metabolism; protoporphyrin-IX biosynthesis; 5-aminolevulinate from L-glutamyl-tRNA(Glu): step 2/2.</text>
</comment>
<comment type="subunit">
    <text evidence="1">Homodimer.</text>
</comment>
<comment type="subcellular location">
    <subcellularLocation>
        <location evidence="1">Cytoplasm</location>
    </subcellularLocation>
</comment>
<comment type="similarity">
    <text evidence="1">Belongs to the class-III pyridoxal-phosphate-dependent aminotransferase family. HemL subfamily.</text>
</comment>
<comment type="sequence caution" evidence="2">
    <conflict type="erroneous initiation">
        <sequence resource="EMBL-CDS" id="ACJ32747"/>
    </conflict>
</comment>
<evidence type="ECO:0000255" key="1">
    <source>
        <dbReference type="HAMAP-Rule" id="MF_00375"/>
    </source>
</evidence>
<evidence type="ECO:0000305" key="2"/>
<gene>
    <name evidence="1" type="primary">hemL1</name>
    <name type="ordered locus">Aflv_0363</name>
</gene>
<name>GSA1_ANOFW</name>
<organism>
    <name type="scientific">Anoxybacillus flavithermus (strain DSM 21510 / WK1)</name>
    <dbReference type="NCBI Taxonomy" id="491915"/>
    <lineage>
        <taxon>Bacteria</taxon>
        <taxon>Bacillati</taxon>
        <taxon>Bacillota</taxon>
        <taxon>Bacilli</taxon>
        <taxon>Bacillales</taxon>
        <taxon>Anoxybacillaceae</taxon>
        <taxon>Anoxybacillus</taxon>
    </lineage>
</organism>
<accession>B7GIK0</accession>
<dbReference type="EC" id="5.4.3.8" evidence="1"/>
<dbReference type="EMBL" id="CP000922">
    <property type="protein sequence ID" value="ACJ32747.1"/>
    <property type="status" value="ALT_INIT"/>
    <property type="molecule type" value="Genomic_DNA"/>
</dbReference>
<dbReference type="RefSeq" id="WP_041637775.1">
    <property type="nucleotide sequence ID" value="NC_011567.1"/>
</dbReference>
<dbReference type="SMR" id="B7GIK0"/>
<dbReference type="STRING" id="491915.Aflv_0363"/>
<dbReference type="GeneID" id="7036595"/>
<dbReference type="KEGG" id="afl:Aflv_0363"/>
<dbReference type="PATRIC" id="fig|491915.6.peg.372"/>
<dbReference type="eggNOG" id="COG0001">
    <property type="taxonomic scope" value="Bacteria"/>
</dbReference>
<dbReference type="HOGENOM" id="CLU_016922_1_5_9"/>
<dbReference type="UniPathway" id="UPA00251">
    <property type="reaction ID" value="UER00317"/>
</dbReference>
<dbReference type="Proteomes" id="UP000000742">
    <property type="component" value="Chromosome"/>
</dbReference>
<dbReference type="GO" id="GO:0005737">
    <property type="term" value="C:cytoplasm"/>
    <property type="evidence" value="ECO:0007669"/>
    <property type="project" value="UniProtKB-SubCell"/>
</dbReference>
<dbReference type="GO" id="GO:0042286">
    <property type="term" value="F:glutamate-1-semialdehyde 2,1-aminomutase activity"/>
    <property type="evidence" value="ECO:0007669"/>
    <property type="project" value="UniProtKB-UniRule"/>
</dbReference>
<dbReference type="GO" id="GO:0030170">
    <property type="term" value="F:pyridoxal phosphate binding"/>
    <property type="evidence" value="ECO:0007669"/>
    <property type="project" value="InterPro"/>
</dbReference>
<dbReference type="GO" id="GO:0008483">
    <property type="term" value="F:transaminase activity"/>
    <property type="evidence" value="ECO:0007669"/>
    <property type="project" value="InterPro"/>
</dbReference>
<dbReference type="GO" id="GO:0006782">
    <property type="term" value="P:protoporphyrinogen IX biosynthetic process"/>
    <property type="evidence" value="ECO:0007669"/>
    <property type="project" value="UniProtKB-UniRule"/>
</dbReference>
<dbReference type="CDD" id="cd00610">
    <property type="entry name" value="OAT_like"/>
    <property type="match status" value="1"/>
</dbReference>
<dbReference type="FunFam" id="3.40.640.10:FF:000021">
    <property type="entry name" value="Glutamate-1-semialdehyde 2,1-aminomutase"/>
    <property type="match status" value="1"/>
</dbReference>
<dbReference type="Gene3D" id="3.90.1150.10">
    <property type="entry name" value="Aspartate Aminotransferase, domain 1"/>
    <property type="match status" value="1"/>
</dbReference>
<dbReference type="Gene3D" id="3.40.640.10">
    <property type="entry name" value="Type I PLP-dependent aspartate aminotransferase-like (Major domain)"/>
    <property type="match status" value="1"/>
</dbReference>
<dbReference type="HAMAP" id="MF_00375">
    <property type="entry name" value="HemL_aminotrans_3"/>
    <property type="match status" value="1"/>
</dbReference>
<dbReference type="InterPro" id="IPR004639">
    <property type="entry name" value="4pyrrol_synth_GluAld_NH2Trfase"/>
</dbReference>
<dbReference type="InterPro" id="IPR005814">
    <property type="entry name" value="Aminotrans_3"/>
</dbReference>
<dbReference type="InterPro" id="IPR049704">
    <property type="entry name" value="Aminotrans_3_PPA_site"/>
</dbReference>
<dbReference type="InterPro" id="IPR015424">
    <property type="entry name" value="PyrdxlP-dep_Trfase"/>
</dbReference>
<dbReference type="InterPro" id="IPR015421">
    <property type="entry name" value="PyrdxlP-dep_Trfase_major"/>
</dbReference>
<dbReference type="InterPro" id="IPR015422">
    <property type="entry name" value="PyrdxlP-dep_Trfase_small"/>
</dbReference>
<dbReference type="NCBIfam" id="TIGR00713">
    <property type="entry name" value="hemL"/>
    <property type="match status" value="1"/>
</dbReference>
<dbReference type="NCBIfam" id="NF000818">
    <property type="entry name" value="PRK00062.1"/>
    <property type="match status" value="1"/>
</dbReference>
<dbReference type="NCBIfam" id="NF009055">
    <property type="entry name" value="PRK12389.1"/>
    <property type="match status" value="1"/>
</dbReference>
<dbReference type="PANTHER" id="PTHR43713">
    <property type="entry name" value="GLUTAMATE-1-SEMIALDEHYDE 2,1-AMINOMUTASE"/>
    <property type="match status" value="1"/>
</dbReference>
<dbReference type="PANTHER" id="PTHR43713:SF1">
    <property type="entry name" value="GLUTAMATE-1-SEMIALDEHYDE 2,1-AMINOMUTASE 2"/>
    <property type="match status" value="1"/>
</dbReference>
<dbReference type="Pfam" id="PF00202">
    <property type="entry name" value="Aminotran_3"/>
    <property type="match status" value="1"/>
</dbReference>
<dbReference type="PIRSF" id="PIRSF000521">
    <property type="entry name" value="Transaminase_4ab_Lys_Orn"/>
    <property type="match status" value="1"/>
</dbReference>
<dbReference type="SUPFAM" id="SSF53383">
    <property type="entry name" value="PLP-dependent transferases"/>
    <property type="match status" value="1"/>
</dbReference>
<dbReference type="PROSITE" id="PS00600">
    <property type="entry name" value="AA_TRANSFER_CLASS_3"/>
    <property type="match status" value="1"/>
</dbReference>